<keyword id="KW-0963">Cytoplasm</keyword>
<keyword id="KW-0251">Elongation factor</keyword>
<keyword id="KW-0648">Protein biosynthesis</keyword>
<comment type="function">
    <text evidence="1">Associates with the EF-Tu.GDP complex and induces the exchange of GDP to GTP. It remains bound to the aminoacyl-tRNA.EF-Tu.GTP complex up to the GTP hydrolysis stage on the ribosome.</text>
</comment>
<comment type="subcellular location">
    <subcellularLocation>
        <location evidence="1">Cytoplasm</location>
    </subcellularLocation>
</comment>
<comment type="similarity">
    <text evidence="1">Belongs to the EF-Ts family.</text>
</comment>
<name>EFTS_POLNS</name>
<feature type="chain" id="PRO_1000116769" description="Elongation factor Ts">
    <location>
        <begin position="1"/>
        <end position="294"/>
    </location>
</feature>
<feature type="region of interest" description="Involved in Mg(2+) ion dislocation from EF-Tu" evidence="1">
    <location>
        <begin position="80"/>
        <end position="83"/>
    </location>
</feature>
<reference key="1">
    <citation type="journal article" date="2013" name="Proc. Natl. Acad. Sci. U.S.A.">
        <title>Polynucleobacter necessarius, a model for genome reduction in both free-living and symbiotic bacteria.</title>
        <authorList>
            <person name="Boscaro V."/>
            <person name="Felletti M."/>
            <person name="Vannini C."/>
            <person name="Ackerman M.S."/>
            <person name="Chain P.S."/>
            <person name="Malfatti S."/>
            <person name="Vergez L.M."/>
            <person name="Shin M."/>
            <person name="Doak T.G."/>
            <person name="Lynch M."/>
            <person name="Petroni G."/>
        </authorList>
    </citation>
    <scope>NUCLEOTIDE SEQUENCE [LARGE SCALE GENOMIC DNA]</scope>
    <source>
        <strain>STIR1</strain>
    </source>
</reference>
<gene>
    <name evidence="1" type="primary">tsf</name>
    <name type="ordered locus">Pnec_0508</name>
</gene>
<organism>
    <name type="scientific">Polynucleobacter necessarius subsp. necessarius (strain STIR1)</name>
    <dbReference type="NCBI Taxonomy" id="452638"/>
    <lineage>
        <taxon>Bacteria</taxon>
        <taxon>Pseudomonadati</taxon>
        <taxon>Pseudomonadota</taxon>
        <taxon>Betaproteobacteria</taxon>
        <taxon>Burkholderiales</taxon>
        <taxon>Burkholderiaceae</taxon>
        <taxon>Polynucleobacter</taxon>
    </lineage>
</organism>
<proteinExistence type="inferred from homology"/>
<evidence type="ECO:0000255" key="1">
    <source>
        <dbReference type="HAMAP-Rule" id="MF_00050"/>
    </source>
</evidence>
<dbReference type="EMBL" id="CP001010">
    <property type="protein sequence ID" value="ACB43771.1"/>
    <property type="molecule type" value="Genomic_DNA"/>
</dbReference>
<dbReference type="SMR" id="B1XTU4"/>
<dbReference type="STRING" id="452638.Pnec_0508"/>
<dbReference type="KEGG" id="pne:Pnec_0508"/>
<dbReference type="eggNOG" id="COG0264">
    <property type="taxonomic scope" value="Bacteria"/>
</dbReference>
<dbReference type="HOGENOM" id="CLU_047155_0_2_4"/>
<dbReference type="OrthoDB" id="9808348at2"/>
<dbReference type="GO" id="GO:0005737">
    <property type="term" value="C:cytoplasm"/>
    <property type="evidence" value="ECO:0007669"/>
    <property type="project" value="UniProtKB-SubCell"/>
</dbReference>
<dbReference type="GO" id="GO:0003746">
    <property type="term" value="F:translation elongation factor activity"/>
    <property type="evidence" value="ECO:0007669"/>
    <property type="project" value="UniProtKB-UniRule"/>
</dbReference>
<dbReference type="CDD" id="cd14275">
    <property type="entry name" value="UBA_EF-Ts"/>
    <property type="match status" value="1"/>
</dbReference>
<dbReference type="FunFam" id="1.10.286.20:FF:000001">
    <property type="entry name" value="Elongation factor Ts"/>
    <property type="match status" value="1"/>
</dbReference>
<dbReference type="FunFam" id="1.10.8.10:FF:000001">
    <property type="entry name" value="Elongation factor Ts"/>
    <property type="match status" value="1"/>
</dbReference>
<dbReference type="Gene3D" id="1.10.286.20">
    <property type="match status" value="1"/>
</dbReference>
<dbReference type="Gene3D" id="1.10.8.10">
    <property type="entry name" value="DNA helicase RuvA subunit, C-terminal domain"/>
    <property type="match status" value="1"/>
</dbReference>
<dbReference type="Gene3D" id="3.30.479.20">
    <property type="entry name" value="Elongation factor Ts, dimerisation domain"/>
    <property type="match status" value="2"/>
</dbReference>
<dbReference type="HAMAP" id="MF_00050">
    <property type="entry name" value="EF_Ts"/>
    <property type="match status" value="1"/>
</dbReference>
<dbReference type="InterPro" id="IPR036402">
    <property type="entry name" value="EF-Ts_dimer_sf"/>
</dbReference>
<dbReference type="InterPro" id="IPR001816">
    <property type="entry name" value="Transl_elong_EFTs/EF1B"/>
</dbReference>
<dbReference type="InterPro" id="IPR014039">
    <property type="entry name" value="Transl_elong_EFTs/EF1B_dimer"/>
</dbReference>
<dbReference type="InterPro" id="IPR018101">
    <property type="entry name" value="Transl_elong_Ts_CS"/>
</dbReference>
<dbReference type="InterPro" id="IPR009060">
    <property type="entry name" value="UBA-like_sf"/>
</dbReference>
<dbReference type="NCBIfam" id="TIGR00116">
    <property type="entry name" value="tsf"/>
    <property type="match status" value="1"/>
</dbReference>
<dbReference type="PANTHER" id="PTHR11741">
    <property type="entry name" value="ELONGATION FACTOR TS"/>
    <property type="match status" value="1"/>
</dbReference>
<dbReference type="PANTHER" id="PTHR11741:SF0">
    <property type="entry name" value="ELONGATION FACTOR TS, MITOCHONDRIAL"/>
    <property type="match status" value="1"/>
</dbReference>
<dbReference type="Pfam" id="PF00889">
    <property type="entry name" value="EF_TS"/>
    <property type="match status" value="1"/>
</dbReference>
<dbReference type="SUPFAM" id="SSF54713">
    <property type="entry name" value="Elongation factor Ts (EF-Ts), dimerisation domain"/>
    <property type="match status" value="2"/>
</dbReference>
<dbReference type="SUPFAM" id="SSF46934">
    <property type="entry name" value="UBA-like"/>
    <property type="match status" value="1"/>
</dbReference>
<dbReference type="PROSITE" id="PS01127">
    <property type="entry name" value="EF_TS_2"/>
    <property type="match status" value="1"/>
</dbReference>
<sequence>MVAITAAMVGELRAKTDAPMMECKKALTEADGDMARAEEILRVKLGSKAGKAASRVTAEGIVAASINSTTGALLEVNCETDFVSKNDDFLAFANDCVKLVAEKNPADVAALLALPLNGQTVDEVRSALIGKIGENIMPRHFKRFAGSNKLVSYLHGTRIGVVVEFEGDDTAAKDVAMHIAAMKPVALSMADVPAEAIAVERSVAVQKAAESGKPPEIVEKMVEGSIQKYLKEVSLLNQTFVKNDKQTVEQMLKAANTTIKGFTMFVVGEGIEKRQDDFAAEVAAQVAAASKATA</sequence>
<accession>B1XTU4</accession>
<protein>
    <recommendedName>
        <fullName evidence="1">Elongation factor Ts</fullName>
        <shortName evidence="1">EF-Ts</shortName>
    </recommendedName>
</protein>